<keyword id="KW-0067">ATP-binding</keyword>
<keyword id="KW-0119">Carbohydrate metabolism</keyword>
<keyword id="KW-0963">Cytoplasm</keyword>
<keyword id="KW-0299">Galactose metabolism</keyword>
<keyword id="KW-0418">Kinase</keyword>
<keyword id="KW-0460">Magnesium</keyword>
<keyword id="KW-0479">Metal-binding</keyword>
<keyword id="KW-0547">Nucleotide-binding</keyword>
<keyword id="KW-1185">Reference proteome</keyword>
<keyword id="KW-0808">Transferase</keyword>
<comment type="function">
    <text evidence="1">Catalyzes the transfer of the gamma-phosphate of ATP to D-galactose to form alpha-D-galactose-1-phosphate (Gal-1-P).</text>
</comment>
<comment type="catalytic activity">
    <reaction evidence="1">
        <text>alpha-D-galactose + ATP = alpha-D-galactose 1-phosphate + ADP + H(+)</text>
        <dbReference type="Rhea" id="RHEA:13553"/>
        <dbReference type="ChEBI" id="CHEBI:15378"/>
        <dbReference type="ChEBI" id="CHEBI:28061"/>
        <dbReference type="ChEBI" id="CHEBI:30616"/>
        <dbReference type="ChEBI" id="CHEBI:58336"/>
        <dbReference type="ChEBI" id="CHEBI:456216"/>
        <dbReference type="EC" id="2.7.1.6"/>
    </reaction>
</comment>
<comment type="pathway">
    <text evidence="1">Carbohydrate metabolism; galactose metabolism.</text>
</comment>
<comment type="subcellular location">
    <subcellularLocation>
        <location evidence="1">Cytoplasm</location>
    </subcellularLocation>
</comment>
<comment type="similarity">
    <text evidence="1">Belongs to the GHMP kinase family. GalK subfamily.</text>
</comment>
<gene>
    <name evidence="1" type="primary">galK</name>
    <name type="ordered locus">SSON_0709</name>
</gene>
<organism>
    <name type="scientific">Shigella sonnei (strain Ss046)</name>
    <dbReference type="NCBI Taxonomy" id="300269"/>
    <lineage>
        <taxon>Bacteria</taxon>
        <taxon>Pseudomonadati</taxon>
        <taxon>Pseudomonadota</taxon>
        <taxon>Gammaproteobacteria</taxon>
        <taxon>Enterobacterales</taxon>
        <taxon>Enterobacteriaceae</taxon>
        <taxon>Shigella</taxon>
    </lineage>
</organism>
<name>GAL1_SHISS</name>
<feature type="chain" id="PRO_1000005764" description="Galactokinase">
    <location>
        <begin position="1"/>
        <end position="382"/>
    </location>
</feature>
<feature type="active site" description="Proton acceptor" evidence="1">
    <location>
        <position position="174"/>
    </location>
</feature>
<feature type="binding site" evidence="1">
    <location>
        <begin position="34"/>
        <end position="37"/>
    </location>
    <ligand>
        <name>substrate</name>
    </ligand>
</feature>
<feature type="binding site" evidence="1">
    <location>
        <begin position="124"/>
        <end position="130"/>
    </location>
    <ligand>
        <name>ATP</name>
        <dbReference type="ChEBI" id="CHEBI:30616"/>
    </ligand>
</feature>
<feature type="binding site" evidence="1">
    <location>
        <position position="130"/>
    </location>
    <ligand>
        <name>Mg(2+)</name>
        <dbReference type="ChEBI" id="CHEBI:18420"/>
    </ligand>
</feature>
<feature type="binding site" evidence="1">
    <location>
        <position position="162"/>
    </location>
    <ligand>
        <name>Mg(2+)</name>
        <dbReference type="ChEBI" id="CHEBI:18420"/>
    </ligand>
</feature>
<feature type="binding site" evidence="1">
    <location>
        <position position="223"/>
    </location>
    <ligand>
        <name>substrate</name>
    </ligand>
</feature>
<feature type="site" description="Transition state stabilizer" evidence="1">
    <location>
        <position position="28"/>
    </location>
</feature>
<sequence>MSLKEKTQSLFANAFGYPATHTIQAPGRVNLIGEHTDYNDGFVLPCAIDYQTVISCAPRDDRKVRVMAADYENQLDEFSLNAPIVAHENYQWANYVRGVVKHLQLRNNSFGGVDMVISGNVPQGAGLSSSASLEVAVGTVLQQLYHLPLDGAQIALNGQEAENQFVGCNCGIMDQLISALGKKDHALLIDCRSLGTKAVSMPKGVAVVIINSNFKRTLVGSEYNTRREQCETGARFFQQPALRDVTIEEFNAVAHELDPIVAKRVRHILTENARTVEAASALEQGDLKRMGELMAESHASMRDDFEITVPQIDTLVEIVKAVIGDKGGVRMTGGGFGGCIVALIPEELVPAVQQAVAEQYEAKTGIKETFYVCKPSQGAGQC</sequence>
<reference key="1">
    <citation type="journal article" date="2005" name="Nucleic Acids Res.">
        <title>Genome dynamics and diversity of Shigella species, the etiologic agents of bacillary dysentery.</title>
        <authorList>
            <person name="Yang F."/>
            <person name="Yang J."/>
            <person name="Zhang X."/>
            <person name="Chen L."/>
            <person name="Jiang Y."/>
            <person name="Yan Y."/>
            <person name="Tang X."/>
            <person name="Wang J."/>
            <person name="Xiong Z."/>
            <person name="Dong J."/>
            <person name="Xue Y."/>
            <person name="Zhu Y."/>
            <person name="Xu X."/>
            <person name="Sun L."/>
            <person name="Chen S."/>
            <person name="Nie H."/>
            <person name="Peng J."/>
            <person name="Xu J."/>
            <person name="Wang Y."/>
            <person name="Yuan Z."/>
            <person name="Wen Y."/>
            <person name="Yao Z."/>
            <person name="Shen Y."/>
            <person name="Qiang B."/>
            <person name="Hou Y."/>
            <person name="Yu J."/>
            <person name="Jin Q."/>
        </authorList>
    </citation>
    <scope>NUCLEOTIDE SEQUENCE [LARGE SCALE GENOMIC DNA]</scope>
    <source>
        <strain>Ss046</strain>
    </source>
</reference>
<proteinExistence type="inferred from homology"/>
<dbReference type="EC" id="2.7.1.6" evidence="1"/>
<dbReference type="EMBL" id="CP000038">
    <property type="protein sequence ID" value="AAZ87459.1"/>
    <property type="molecule type" value="Genomic_DNA"/>
</dbReference>
<dbReference type="RefSeq" id="WP_000053437.1">
    <property type="nucleotide sequence ID" value="NC_007384.1"/>
</dbReference>
<dbReference type="SMR" id="Q3Z453"/>
<dbReference type="GeneID" id="93776724"/>
<dbReference type="KEGG" id="ssn:SSON_0709"/>
<dbReference type="HOGENOM" id="CLU_017814_2_1_6"/>
<dbReference type="UniPathway" id="UPA00214"/>
<dbReference type="Proteomes" id="UP000002529">
    <property type="component" value="Chromosome"/>
</dbReference>
<dbReference type="GO" id="GO:0005829">
    <property type="term" value="C:cytosol"/>
    <property type="evidence" value="ECO:0007669"/>
    <property type="project" value="TreeGrafter"/>
</dbReference>
<dbReference type="GO" id="GO:0005524">
    <property type="term" value="F:ATP binding"/>
    <property type="evidence" value="ECO:0007669"/>
    <property type="project" value="UniProtKB-UniRule"/>
</dbReference>
<dbReference type="GO" id="GO:0004335">
    <property type="term" value="F:galactokinase activity"/>
    <property type="evidence" value="ECO:0007669"/>
    <property type="project" value="UniProtKB-UniRule"/>
</dbReference>
<dbReference type="GO" id="GO:0000287">
    <property type="term" value="F:magnesium ion binding"/>
    <property type="evidence" value="ECO:0007669"/>
    <property type="project" value="UniProtKB-UniRule"/>
</dbReference>
<dbReference type="GO" id="GO:0006012">
    <property type="term" value="P:galactose metabolic process"/>
    <property type="evidence" value="ECO:0007669"/>
    <property type="project" value="UniProtKB-UniRule"/>
</dbReference>
<dbReference type="FunFam" id="3.30.230.10:FF:000017">
    <property type="entry name" value="Galactokinase"/>
    <property type="match status" value="1"/>
</dbReference>
<dbReference type="FunFam" id="3.30.70.890:FF:000001">
    <property type="entry name" value="Galactokinase"/>
    <property type="match status" value="1"/>
</dbReference>
<dbReference type="Gene3D" id="3.30.230.10">
    <property type="match status" value="1"/>
</dbReference>
<dbReference type="Gene3D" id="3.30.70.890">
    <property type="entry name" value="GHMP kinase, C-terminal domain"/>
    <property type="match status" value="1"/>
</dbReference>
<dbReference type="HAMAP" id="MF_00246">
    <property type="entry name" value="Galactokinase"/>
    <property type="match status" value="1"/>
</dbReference>
<dbReference type="InterPro" id="IPR000705">
    <property type="entry name" value="Galactokinase"/>
</dbReference>
<dbReference type="InterPro" id="IPR022963">
    <property type="entry name" value="Galactokinase_bac"/>
</dbReference>
<dbReference type="InterPro" id="IPR019741">
    <property type="entry name" value="Galactokinase_CS"/>
</dbReference>
<dbReference type="InterPro" id="IPR019539">
    <property type="entry name" value="GalKase_N"/>
</dbReference>
<dbReference type="InterPro" id="IPR013750">
    <property type="entry name" value="GHMP_kinase_C_dom"/>
</dbReference>
<dbReference type="InterPro" id="IPR036554">
    <property type="entry name" value="GHMP_kinase_C_sf"/>
</dbReference>
<dbReference type="InterPro" id="IPR006204">
    <property type="entry name" value="GHMP_kinase_N_dom"/>
</dbReference>
<dbReference type="InterPro" id="IPR006203">
    <property type="entry name" value="GHMP_knse_ATP-bd_CS"/>
</dbReference>
<dbReference type="InterPro" id="IPR006206">
    <property type="entry name" value="Mevalonate/galactokinase"/>
</dbReference>
<dbReference type="InterPro" id="IPR020568">
    <property type="entry name" value="Ribosomal_Su5_D2-typ_SF"/>
</dbReference>
<dbReference type="InterPro" id="IPR014721">
    <property type="entry name" value="Ribsml_uS5_D2-typ_fold_subgr"/>
</dbReference>
<dbReference type="NCBIfam" id="TIGR00131">
    <property type="entry name" value="gal_kin"/>
    <property type="match status" value="1"/>
</dbReference>
<dbReference type="NCBIfam" id="NF003472">
    <property type="entry name" value="PRK05101.1"/>
    <property type="match status" value="1"/>
</dbReference>
<dbReference type="PANTHER" id="PTHR10457:SF7">
    <property type="entry name" value="GALACTOKINASE-RELATED"/>
    <property type="match status" value="1"/>
</dbReference>
<dbReference type="PANTHER" id="PTHR10457">
    <property type="entry name" value="MEVALONATE KINASE/GALACTOKINASE"/>
    <property type="match status" value="1"/>
</dbReference>
<dbReference type="Pfam" id="PF10509">
    <property type="entry name" value="GalKase_gal_bdg"/>
    <property type="match status" value="1"/>
</dbReference>
<dbReference type="Pfam" id="PF08544">
    <property type="entry name" value="GHMP_kinases_C"/>
    <property type="match status" value="1"/>
</dbReference>
<dbReference type="Pfam" id="PF00288">
    <property type="entry name" value="GHMP_kinases_N"/>
    <property type="match status" value="1"/>
</dbReference>
<dbReference type="PIRSF" id="PIRSF000530">
    <property type="entry name" value="Galactokinase"/>
    <property type="match status" value="1"/>
</dbReference>
<dbReference type="PRINTS" id="PR00473">
    <property type="entry name" value="GALCTOKINASE"/>
</dbReference>
<dbReference type="PRINTS" id="PR00959">
    <property type="entry name" value="MEVGALKINASE"/>
</dbReference>
<dbReference type="SUPFAM" id="SSF55060">
    <property type="entry name" value="GHMP Kinase, C-terminal domain"/>
    <property type="match status" value="1"/>
</dbReference>
<dbReference type="SUPFAM" id="SSF54211">
    <property type="entry name" value="Ribosomal protein S5 domain 2-like"/>
    <property type="match status" value="1"/>
</dbReference>
<dbReference type="PROSITE" id="PS00106">
    <property type="entry name" value="GALACTOKINASE"/>
    <property type="match status" value="1"/>
</dbReference>
<dbReference type="PROSITE" id="PS00627">
    <property type="entry name" value="GHMP_KINASES_ATP"/>
    <property type="match status" value="1"/>
</dbReference>
<accession>Q3Z453</accession>
<evidence type="ECO:0000255" key="1">
    <source>
        <dbReference type="HAMAP-Rule" id="MF_00246"/>
    </source>
</evidence>
<protein>
    <recommendedName>
        <fullName evidence="1">Galactokinase</fullName>
        <ecNumber evidence="1">2.7.1.6</ecNumber>
    </recommendedName>
    <alternativeName>
        <fullName evidence="1">Galactose kinase</fullName>
    </alternativeName>
</protein>